<protein>
    <recommendedName>
        <fullName>tRNA pseudouridine synthase 1</fullName>
        <ecNumber evidence="5 6 9">5.4.99.-</ecNumber>
    </recommendedName>
    <alternativeName>
        <fullName>tRNA pseudouridylate synthase 1</fullName>
    </alternativeName>
    <alternativeName>
        <fullName>tRNA-uridine isomerase 1</fullName>
    </alternativeName>
</protein>
<organism>
    <name type="scientific">Saccharomyces cerevisiae (strain ATCC 204508 / S288c)</name>
    <name type="common">Baker's yeast</name>
    <dbReference type="NCBI Taxonomy" id="559292"/>
    <lineage>
        <taxon>Eukaryota</taxon>
        <taxon>Fungi</taxon>
        <taxon>Dikarya</taxon>
        <taxon>Ascomycota</taxon>
        <taxon>Saccharomycotina</taxon>
        <taxon>Saccharomycetes</taxon>
        <taxon>Saccharomycetales</taxon>
        <taxon>Saccharomycetaceae</taxon>
        <taxon>Saccharomyces</taxon>
    </lineage>
</organism>
<proteinExistence type="evidence at protein level"/>
<name>PUS1_YEAST</name>
<dbReference type="EC" id="5.4.99.-" evidence="5 6 9"/>
<dbReference type="EMBL" id="X80673">
    <property type="protein sequence ID" value="CAA56698.1"/>
    <property type="molecule type" value="Genomic_DNA"/>
</dbReference>
<dbReference type="EMBL" id="Z73568">
    <property type="protein sequence ID" value="CAA97927.1"/>
    <property type="molecule type" value="Genomic_DNA"/>
</dbReference>
<dbReference type="EMBL" id="BK006949">
    <property type="protein sequence ID" value="DAA11224.1"/>
    <property type="molecule type" value="Genomic_DNA"/>
</dbReference>
<dbReference type="PIR" id="S65231">
    <property type="entry name" value="S65231"/>
</dbReference>
<dbReference type="RefSeq" id="NP_015112.1">
    <property type="nucleotide sequence ID" value="NM_001184026.1"/>
</dbReference>
<dbReference type="PDB" id="7R9F">
    <property type="method" value="X-ray"/>
    <property type="resolution" value="2.89 A"/>
    <property type="chains" value="A=1-544"/>
</dbReference>
<dbReference type="PDB" id="7R9G">
    <property type="method" value="X-ray"/>
    <property type="resolution" value="2.40 A"/>
    <property type="chains" value="A=1-544"/>
</dbReference>
<dbReference type="PDBsum" id="7R9F"/>
<dbReference type="PDBsum" id="7R9G"/>
<dbReference type="SMR" id="Q12211"/>
<dbReference type="BioGRID" id="35973">
    <property type="interactions" value="116"/>
</dbReference>
<dbReference type="DIP" id="DIP-5344N"/>
<dbReference type="FunCoup" id="Q12211">
    <property type="interactions" value="1206"/>
</dbReference>
<dbReference type="IntAct" id="Q12211">
    <property type="interactions" value="24"/>
</dbReference>
<dbReference type="MINT" id="Q12211"/>
<dbReference type="STRING" id="4932.YPL212C"/>
<dbReference type="iPTMnet" id="Q12211"/>
<dbReference type="PaxDb" id="4932-YPL212C"/>
<dbReference type="PeptideAtlas" id="Q12211"/>
<dbReference type="EnsemblFungi" id="YPL212C_mRNA">
    <property type="protein sequence ID" value="YPL212C"/>
    <property type="gene ID" value="YPL212C"/>
</dbReference>
<dbReference type="GeneID" id="855889"/>
<dbReference type="KEGG" id="sce:YPL212C"/>
<dbReference type="AGR" id="SGD:S000006133"/>
<dbReference type="SGD" id="S000006133">
    <property type="gene designation" value="PUS1"/>
</dbReference>
<dbReference type="VEuPathDB" id="FungiDB:YPL212C"/>
<dbReference type="eggNOG" id="KOG2553">
    <property type="taxonomic scope" value="Eukaryota"/>
</dbReference>
<dbReference type="GeneTree" id="ENSGT00950000183160"/>
<dbReference type="HOGENOM" id="CLU_021971_0_1_1"/>
<dbReference type="InParanoid" id="Q12211"/>
<dbReference type="OMA" id="NKAFDCR"/>
<dbReference type="OrthoDB" id="10256309at2759"/>
<dbReference type="BioCyc" id="MetaCyc:YPL212C-MONOMER"/>
<dbReference type="BioCyc" id="YEAST:YPL212C-MONOMER"/>
<dbReference type="BRENDA" id="5.4.99.B22">
    <property type="organism ID" value="984"/>
</dbReference>
<dbReference type="BioGRID-ORCS" id="855889">
    <property type="hits" value="1 hit in 10 CRISPR screens"/>
</dbReference>
<dbReference type="PRO" id="PR:Q12211"/>
<dbReference type="Proteomes" id="UP000002311">
    <property type="component" value="Chromosome XVI"/>
</dbReference>
<dbReference type="RNAct" id="Q12211">
    <property type="molecule type" value="protein"/>
</dbReference>
<dbReference type="GO" id="GO:0005654">
    <property type="term" value="C:nucleoplasm"/>
    <property type="evidence" value="ECO:0000304"/>
    <property type="project" value="Reactome"/>
</dbReference>
<dbReference type="GO" id="GO:0005634">
    <property type="term" value="C:nucleus"/>
    <property type="evidence" value="ECO:0000314"/>
    <property type="project" value="SGD"/>
</dbReference>
<dbReference type="GO" id="GO:0003729">
    <property type="term" value="F:mRNA binding"/>
    <property type="evidence" value="ECO:0007005"/>
    <property type="project" value="SGD"/>
</dbReference>
<dbReference type="GO" id="GO:0009982">
    <property type="term" value="F:pseudouridine synthase activity"/>
    <property type="evidence" value="ECO:0000314"/>
    <property type="project" value="UniProtKB"/>
</dbReference>
<dbReference type="GO" id="GO:0106032">
    <property type="term" value="F:snRNA pseudouridine synthase activity"/>
    <property type="evidence" value="ECO:0007669"/>
    <property type="project" value="RHEA"/>
</dbReference>
<dbReference type="GO" id="GO:0106029">
    <property type="term" value="F:tRNA pseudouridine synthase activity"/>
    <property type="evidence" value="ECO:0007669"/>
    <property type="project" value="RHEA"/>
</dbReference>
<dbReference type="GO" id="GO:0006397">
    <property type="term" value="P:mRNA processing"/>
    <property type="evidence" value="ECO:0007669"/>
    <property type="project" value="UniProtKB-KW"/>
</dbReference>
<dbReference type="GO" id="GO:1990481">
    <property type="term" value="P:mRNA pseudouridine synthesis"/>
    <property type="evidence" value="ECO:0000315"/>
    <property type="project" value="SGD"/>
</dbReference>
<dbReference type="GO" id="GO:0031120">
    <property type="term" value="P:snRNA pseudouridine synthesis"/>
    <property type="evidence" value="ECO:0000315"/>
    <property type="project" value="SGD"/>
</dbReference>
<dbReference type="GO" id="GO:0006400">
    <property type="term" value="P:tRNA modification"/>
    <property type="evidence" value="ECO:0000304"/>
    <property type="project" value="Reactome"/>
</dbReference>
<dbReference type="GO" id="GO:0031119">
    <property type="term" value="P:tRNA pseudouridine synthesis"/>
    <property type="evidence" value="ECO:0000314"/>
    <property type="project" value="SGD"/>
</dbReference>
<dbReference type="CDD" id="cd02568">
    <property type="entry name" value="PseudoU_synth_PUS1_PUS2"/>
    <property type="match status" value="1"/>
</dbReference>
<dbReference type="FunFam" id="3.30.70.580:FF:000002">
    <property type="entry name" value="tRNA pseudouridine synthase"/>
    <property type="match status" value="1"/>
</dbReference>
<dbReference type="FunFam" id="3.30.70.660:FF:000002">
    <property type="entry name" value="tRNA pseudouridine synthase"/>
    <property type="match status" value="1"/>
</dbReference>
<dbReference type="Gene3D" id="3.30.70.660">
    <property type="entry name" value="Pseudouridine synthase I, catalytic domain, C-terminal subdomain"/>
    <property type="match status" value="1"/>
</dbReference>
<dbReference type="Gene3D" id="3.30.70.580">
    <property type="entry name" value="Pseudouridine synthase I, catalytic domain, N-terminal subdomain"/>
    <property type="match status" value="1"/>
</dbReference>
<dbReference type="InterPro" id="IPR020103">
    <property type="entry name" value="PsdUridine_synth_cat_dom_sf"/>
</dbReference>
<dbReference type="InterPro" id="IPR001406">
    <property type="entry name" value="PsdUridine_synth_TruA"/>
</dbReference>
<dbReference type="InterPro" id="IPR020097">
    <property type="entry name" value="PsdUridine_synth_TruA_a/b_dom"/>
</dbReference>
<dbReference type="InterPro" id="IPR020095">
    <property type="entry name" value="PsdUridine_synth_TruA_C"/>
</dbReference>
<dbReference type="InterPro" id="IPR041708">
    <property type="entry name" value="PUS1/PUS2-like"/>
</dbReference>
<dbReference type="InterPro" id="IPR020094">
    <property type="entry name" value="TruA/RsuA/RluB/E/F_N"/>
</dbReference>
<dbReference type="NCBIfam" id="TIGR00071">
    <property type="entry name" value="hisT_truA"/>
    <property type="match status" value="1"/>
</dbReference>
<dbReference type="PANTHER" id="PTHR11142">
    <property type="entry name" value="PSEUDOURIDYLATE SYNTHASE"/>
    <property type="match status" value="1"/>
</dbReference>
<dbReference type="PANTHER" id="PTHR11142:SF4">
    <property type="entry name" value="PSEUDOURIDYLATE SYNTHASE 1 HOMOLOG"/>
    <property type="match status" value="1"/>
</dbReference>
<dbReference type="Pfam" id="PF01416">
    <property type="entry name" value="PseudoU_synth_1"/>
    <property type="match status" value="1"/>
</dbReference>
<dbReference type="SUPFAM" id="SSF55120">
    <property type="entry name" value="Pseudouridine synthase"/>
    <property type="match status" value="1"/>
</dbReference>
<reference key="1">
    <citation type="journal article" date="1996" name="EMBO J.">
        <title>Nuclear pore proteins are involved in the biogenesis of functional tRNA.</title>
        <authorList>
            <person name="Simos G."/>
            <person name="Tekotte H."/>
            <person name="Grosjean H."/>
            <person name="Segref A."/>
            <person name="Sharma K."/>
            <person name="Tollervey D."/>
            <person name="Hurt E.C."/>
        </authorList>
    </citation>
    <scope>NUCLEOTIDE SEQUENCE [GENOMIC DNA]</scope>
</reference>
<reference key="2">
    <citation type="journal article" date="1997" name="Nature">
        <title>The nucleotide sequence of Saccharomyces cerevisiae chromosome XVI.</title>
        <authorList>
            <person name="Bussey H."/>
            <person name="Storms R.K."/>
            <person name="Ahmed A."/>
            <person name="Albermann K."/>
            <person name="Allen E."/>
            <person name="Ansorge W."/>
            <person name="Araujo R."/>
            <person name="Aparicio A."/>
            <person name="Barrell B.G."/>
            <person name="Badcock K."/>
            <person name="Benes V."/>
            <person name="Botstein D."/>
            <person name="Bowman S."/>
            <person name="Brueckner M."/>
            <person name="Carpenter J."/>
            <person name="Cherry J.M."/>
            <person name="Chung E."/>
            <person name="Churcher C.M."/>
            <person name="Coster F."/>
            <person name="Davis K."/>
            <person name="Davis R.W."/>
            <person name="Dietrich F.S."/>
            <person name="Delius H."/>
            <person name="DiPaolo T."/>
            <person name="Dubois E."/>
            <person name="Duesterhoeft A."/>
            <person name="Duncan M."/>
            <person name="Floeth M."/>
            <person name="Fortin N."/>
            <person name="Friesen J.D."/>
            <person name="Fritz C."/>
            <person name="Goffeau A."/>
            <person name="Hall J."/>
            <person name="Hebling U."/>
            <person name="Heumann K."/>
            <person name="Hilbert H."/>
            <person name="Hillier L.W."/>
            <person name="Hunicke-Smith S."/>
            <person name="Hyman R.W."/>
            <person name="Johnston M."/>
            <person name="Kalman S."/>
            <person name="Kleine K."/>
            <person name="Komp C."/>
            <person name="Kurdi O."/>
            <person name="Lashkari D."/>
            <person name="Lew H."/>
            <person name="Lin A."/>
            <person name="Lin D."/>
            <person name="Louis E.J."/>
            <person name="Marathe R."/>
            <person name="Messenguy F."/>
            <person name="Mewes H.-W."/>
            <person name="Mirtipati S."/>
            <person name="Moestl D."/>
            <person name="Mueller-Auer S."/>
            <person name="Namath A."/>
            <person name="Nentwich U."/>
            <person name="Oefner P."/>
            <person name="Pearson D."/>
            <person name="Petel F.X."/>
            <person name="Pohl T.M."/>
            <person name="Purnelle B."/>
            <person name="Rajandream M.A."/>
            <person name="Rechmann S."/>
            <person name="Rieger M."/>
            <person name="Riles L."/>
            <person name="Roberts D."/>
            <person name="Schaefer M."/>
            <person name="Scharfe M."/>
            <person name="Scherens B."/>
            <person name="Schramm S."/>
            <person name="Schroeder M."/>
            <person name="Sdicu A.-M."/>
            <person name="Tettelin H."/>
            <person name="Urrestarazu L.A."/>
            <person name="Ushinsky S."/>
            <person name="Vierendeels F."/>
            <person name="Vissers S."/>
            <person name="Voss H."/>
            <person name="Walsh S.V."/>
            <person name="Wambutt R."/>
            <person name="Wang Y."/>
            <person name="Wedler E."/>
            <person name="Wedler H."/>
            <person name="Winnett E."/>
            <person name="Zhong W.-W."/>
            <person name="Zollner A."/>
            <person name="Vo D.H."/>
            <person name="Hani J."/>
        </authorList>
    </citation>
    <scope>NUCLEOTIDE SEQUENCE [LARGE SCALE GENOMIC DNA]</scope>
    <source>
        <strain>ATCC 204508 / S288c</strain>
    </source>
</reference>
<reference key="3">
    <citation type="journal article" date="2014" name="G3 (Bethesda)">
        <title>The reference genome sequence of Saccharomyces cerevisiae: Then and now.</title>
        <authorList>
            <person name="Engel S.R."/>
            <person name="Dietrich F.S."/>
            <person name="Fisk D.G."/>
            <person name="Binkley G."/>
            <person name="Balakrishnan R."/>
            <person name="Costanzo M.C."/>
            <person name="Dwight S.S."/>
            <person name="Hitz B.C."/>
            <person name="Karra K."/>
            <person name="Nash R.S."/>
            <person name="Weng S."/>
            <person name="Wong E.D."/>
            <person name="Lloyd P."/>
            <person name="Skrzypek M.S."/>
            <person name="Miyasato S.R."/>
            <person name="Simison M."/>
            <person name="Cherry J.M."/>
        </authorList>
    </citation>
    <scope>GENOME REANNOTATION</scope>
    <source>
        <strain>ATCC 204508 / S288c</strain>
    </source>
</reference>
<reference key="4">
    <citation type="journal article" date="1998" name="RNA">
        <title>The yeast tRNA:pseudouridine synthase Pus1p displays a multisite substrate specificity.</title>
        <authorList>
            <person name="Motorin Y."/>
            <person name="Keith G."/>
            <person name="Simon C."/>
            <person name="Foiret D."/>
            <person name="Simos G."/>
            <person name="Hurt E."/>
            <person name="Grosjean H."/>
        </authorList>
    </citation>
    <scope>FUNCTION</scope>
    <scope>CATALYTIC ACTIVITY</scope>
</reference>
<reference key="5">
    <citation type="journal article" date="2001" name="Biochemistry">
        <title>Yeast mitochondrial dehydrogenases are associated in a supramolecular complex.</title>
        <authorList>
            <person name="Grandier-Vazeille X."/>
            <person name="Bathany K."/>
            <person name="Chaignepain S."/>
            <person name="Camougrand N."/>
            <person name="Manon S."/>
            <person name="Schmitter J.-M."/>
        </authorList>
    </citation>
    <scope>SUBCELLULAR LOCATION</scope>
</reference>
<reference key="6">
    <citation type="journal article" date="1998" name="Biochemistry">
        <title>Transfer RNA-pseudouridine synthetase Pus1 of Saccharomyces cerevisiae contains one atom of zinc essential for its native conformation and tRNA recognition.</title>
        <authorList>
            <person name="Arluison V."/>
            <person name="Hountondji C."/>
            <person name="Robert B."/>
            <person name="Grosjean H."/>
        </authorList>
    </citation>
    <scope>ZINC-BINDING</scope>
</reference>
<reference key="7">
    <citation type="journal article" date="1999" name="J. Mol. Biol.">
        <title>Pseudouridine synthetase Pus1 of Saccharomyces cerevisiae: kinetic characterisation, tRNA structural requirement and real-time analysis of its complex with tRNA.</title>
        <authorList>
            <person name="Arluison V."/>
            <person name="Buckle M."/>
            <person name="Grosjean H."/>
        </authorList>
    </citation>
    <scope>FUNCTION</scope>
    <scope>CATALYTIC ACTIVITY</scope>
    <scope>BIOPHYSICOCHEMICAL PROPERTIES</scope>
</reference>
<reference key="8">
    <citation type="journal article" date="2003" name="Nature">
        <title>Global analysis of protein expression in yeast.</title>
        <authorList>
            <person name="Ghaemmaghami S."/>
            <person name="Huh W.-K."/>
            <person name="Bower K."/>
            <person name="Howson R.W."/>
            <person name="Belle A."/>
            <person name="Dephoure N."/>
            <person name="O'Shea E.K."/>
            <person name="Weissman J.S."/>
        </authorList>
    </citation>
    <scope>LEVEL OF PROTEIN EXPRESSION [LARGE SCALE ANALYSIS]</scope>
</reference>
<reference key="9">
    <citation type="journal article" date="2014" name="Cell">
        <title>Transcriptome-wide mapping reveals widespread dynamic-regulated pseudouridylation of ncRNA and mRNA.</title>
        <authorList>
            <person name="Schwartz S."/>
            <person name="Bernstein D.A."/>
            <person name="Mumbach M.R."/>
            <person name="Jovanovic M."/>
            <person name="Herbst R.H."/>
            <person name="Leon-Ricardo B.X."/>
            <person name="Engreitz J.M."/>
            <person name="Guttman M."/>
            <person name="Satija R."/>
            <person name="Lander E.S."/>
            <person name="Fink G."/>
            <person name="Regev A."/>
        </authorList>
    </citation>
    <scope>FUNCTION</scope>
    <scope>CATALYTIC ACTIVITY</scope>
</reference>
<reference key="10">
    <citation type="journal article" date="2019" name="Nat. Chem. Biol.">
        <title>mRNA structure determines modification by pseudouridine synthase 1.</title>
        <authorList>
            <person name="Carlile T.M."/>
            <person name="Martinez N.M."/>
            <person name="Schaening C."/>
            <person name="Su A."/>
            <person name="Bell T.A."/>
            <person name="Zinshteyn B."/>
            <person name="Gilbert W.V."/>
        </authorList>
    </citation>
    <scope>FUNCTION</scope>
    <scope>CATALYTIC ACTIVITY</scope>
</reference>
<keyword id="KW-0002">3D-structure</keyword>
<keyword id="KW-0413">Isomerase</keyword>
<keyword id="KW-0507">mRNA processing</keyword>
<keyword id="KW-0539">Nucleus</keyword>
<keyword id="KW-1185">Reference proteome</keyword>
<keyword id="KW-0819">tRNA processing</keyword>
<keyword id="KW-0862">Zinc</keyword>
<feature type="chain" id="PRO_0000057530" description="tRNA pseudouridine synthase 1">
    <location>
        <begin position="1"/>
        <end position="544"/>
    </location>
</feature>
<feature type="region of interest" description="Disordered" evidence="2">
    <location>
        <begin position="1"/>
        <end position="74"/>
    </location>
</feature>
<feature type="region of interest" description="Disordered" evidence="2">
    <location>
        <begin position="495"/>
        <end position="544"/>
    </location>
</feature>
<feature type="compositionally biased region" description="Basic and acidic residues" evidence="2">
    <location>
        <begin position="1"/>
        <end position="10"/>
    </location>
</feature>
<feature type="compositionally biased region" description="Basic and acidic residues" evidence="2">
    <location>
        <begin position="31"/>
        <end position="61"/>
    </location>
</feature>
<feature type="compositionally biased region" description="Basic and acidic residues" evidence="2">
    <location>
        <begin position="513"/>
        <end position="525"/>
    </location>
</feature>
<feature type="active site" description="Nucleophile" evidence="1">
    <location>
        <position position="134"/>
    </location>
</feature>
<feature type="strand" evidence="11">
    <location>
        <begin position="75"/>
        <end position="83"/>
    </location>
</feature>
<feature type="helix" evidence="11">
    <location>
        <begin position="100"/>
        <end position="111"/>
    </location>
</feature>
<feature type="strand" evidence="11">
    <location>
        <begin position="128"/>
        <end position="130"/>
    </location>
</feature>
<feature type="strand" evidence="11">
    <location>
        <begin position="138"/>
        <end position="148"/>
    </location>
</feature>
<feature type="helix" evidence="11">
    <location>
        <begin position="155"/>
        <end position="161"/>
    </location>
</feature>
<feature type="strand" evidence="11">
    <location>
        <begin position="167"/>
        <end position="174"/>
    </location>
</feature>
<feature type="turn" evidence="11">
    <location>
        <begin position="181"/>
        <end position="184"/>
    </location>
</feature>
<feature type="strand" evidence="11">
    <location>
        <begin position="187"/>
        <end position="195"/>
    </location>
</feature>
<feature type="helix" evidence="11">
    <location>
        <begin position="196"/>
        <end position="199"/>
    </location>
</feature>
<feature type="helix" evidence="11">
    <location>
        <begin position="207"/>
        <end position="213"/>
    </location>
</feature>
<feature type="helix" evidence="11">
    <location>
        <begin position="227"/>
        <end position="241"/>
    </location>
</feature>
<feature type="helix" evidence="11">
    <location>
        <begin position="268"/>
        <end position="285"/>
    </location>
</feature>
<feature type="helix" evidence="11">
    <location>
        <begin position="291"/>
        <end position="302"/>
    </location>
</feature>
<feature type="strand" evidence="11">
    <location>
        <begin position="306"/>
        <end position="309"/>
    </location>
</feature>
<feature type="helix" evidence="11">
    <location>
        <begin position="311"/>
        <end position="313"/>
    </location>
</feature>
<feature type="strand" evidence="11">
    <location>
        <begin position="314"/>
        <end position="316"/>
    </location>
</feature>
<feature type="helix" evidence="11">
    <location>
        <begin position="322"/>
        <end position="324"/>
    </location>
</feature>
<feature type="strand" evidence="11">
    <location>
        <begin position="325"/>
        <end position="333"/>
    </location>
</feature>
<feature type="strand" evidence="11">
    <location>
        <begin position="337"/>
        <end position="339"/>
    </location>
</feature>
<feature type="turn" evidence="11">
    <location>
        <begin position="340"/>
        <end position="343"/>
    </location>
</feature>
<feature type="strand" evidence="11">
    <location>
        <begin position="344"/>
        <end position="354"/>
    </location>
</feature>
<feature type="helix" evidence="11">
    <location>
        <begin position="360"/>
        <end position="374"/>
    </location>
</feature>
<feature type="helix" evidence="11">
    <location>
        <begin position="380"/>
        <end position="383"/>
    </location>
</feature>
<feature type="strand" evidence="11">
    <location>
        <begin position="386"/>
        <end position="388"/>
    </location>
</feature>
<feature type="helix" evidence="11">
    <location>
        <begin position="397"/>
        <end position="399"/>
    </location>
</feature>
<feature type="strand" evidence="11">
    <location>
        <begin position="400"/>
        <end position="406"/>
    </location>
</feature>
<feature type="helix" evidence="11">
    <location>
        <begin position="408"/>
        <end position="414"/>
    </location>
</feature>
<feature type="turn" evidence="11">
    <location>
        <begin position="415"/>
        <end position="418"/>
    </location>
</feature>
<feature type="helix" evidence="11">
    <location>
        <begin position="424"/>
        <end position="426"/>
    </location>
</feature>
<feature type="helix" evidence="11">
    <location>
        <begin position="428"/>
        <end position="438"/>
    </location>
</feature>
<feature type="helix" evidence="11">
    <location>
        <begin position="440"/>
        <end position="450"/>
    </location>
</feature>
<feature type="helix" evidence="11">
    <location>
        <begin position="452"/>
        <end position="461"/>
    </location>
</feature>
<feature type="helix" evidence="11">
    <location>
        <begin position="485"/>
        <end position="488"/>
    </location>
</feature>
<feature type="strand" evidence="11">
    <location>
        <begin position="490"/>
        <end position="492"/>
    </location>
</feature>
<comment type="function">
    <text evidence="3 6 7 9">Formation of pseudouridine at positions 27 and 28 in the anticodon stem and loop of transfer RNAs; at positions 34 and 36 of intron-containing precursor tRNA(Ile) and at position 35 in the intron-containing tRNA(Tyr) (PubMed:10356324, PubMed:25219674, PubMed:9671058). Catalyzes pseudouridylation at position 44 in U2 snRNA (PubMed:25219674). Also catalyzes pseudouridylation of mRNAs (PubMed:25219674, PubMed:31477916).</text>
</comment>
<comment type="catalytic activity">
    <reaction evidence="3 6 9">
        <text>a uridine in tRNA = a pseudouridine in tRNA</text>
        <dbReference type="Rhea" id="RHEA:54572"/>
        <dbReference type="Rhea" id="RHEA-COMP:13339"/>
        <dbReference type="Rhea" id="RHEA-COMP:13934"/>
        <dbReference type="ChEBI" id="CHEBI:65314"/>
        <dbReference type="ChEBI" id="CHEBI:65315"/>
    </reaction>
</comment>
<comment type="catalytic activity">
    <reaction evidence="6">
        <text>uridine in snRNA = pseudouridine in snRNA</text>
        <dbReference type="Rhea" id="RHEA:51124"/>
        <dbReference type="Rhea" id="RHEA-COMP:12891"/>
        <dbReference type="Rhea" id="RHEA-COMP:12892"/>
        <dbReference type="ChEBI" id="CHEBI:65314"/>
        <dbReference type="ChEBI" id="CHEBI:65315"/>
    </reaction>
</comment>
<comment type="catalytic activity">
    <reaction evidence="6 7">
        <text>a uridine in mRNA = a pseudouridine in mRNA</text>
        <dbReference type="Rhea" id="RHEA:56644"/>
        <dbReference type="Rhea" id="RHEA-COMP:14658"/>
        <dbReference type="Rhea" id="RHEA-COMP:14659"/>
        <dbReference type="ChEBI" id="CHEBI:65314"/>
        <dbReference type="ChEBI" id="CHEBI:65315"/>
    </reaction>
</comment>
<comment type="cofactor">
    <cofactor evidence="8">
        <name>Zn(2+)</name>
        <dbReference type="ChEBI" id="CHEBI:29105"/>
    </cofactor>
    <text evidence="8">Binds 1 zinc ion per subunit.</text>
</comment>
<comment type="biophysicochemical properties">
    <kinetics>
        <KM evidence="3">420 nM for tRNA(Val)</KM>
        <KM evidence="3">740 nM for tRNA(Ile)</KM>
        <text evidence="3">kcat is 0.4 min(-1) for tRNA(Val) (PubMed:10356324). kcat is 0.5 min(-1) for tRNA(Ile) (PubMed:10356324).</text>
    </kinetics>
</comment>
<comment type="subcellular location">
    <subcellularLocation>
        <location evidence="4">Nucleus</location>
    </subcellularLocation>
</comment>
<comment type="miscellaneous">
    <text evidence="5">Present with 8130 molecules/cell in log phase SD medium.</text>
</comment>
<comment type="similarity">
    <text evidence="10">Belongs to the tRNA pseudouridine synthase TruA family.</text>
</comment>
<accession>Q12211</accession>
<accession>D6W3F8</accession>
<evidence type="ECO:0000250" key="1">
    <source>
        <dbReference type="UniProtKB" id="P07649"/>
    </source>
</evidence>
<evidence type="ECO:0000256" key="2">
    <source>
        <dbReference type="SAM" id="MobiDB-lite"/>
    </source>
</evidence>
<evidence type="ECO:0000269" key="3">
    <source>
    </source>
</evidence>
<evidence type="ECO:0000269" key="4">
    <source>
    </source>
</evidence>
<evidence type="ECO:0000269" key="5">
    <source>
    </source>
</evidence>
<evidence type="ECO:0000269" key="6">
    <source>
    </source>
</evidence>
<evidence type="ECO:0000269" key="7">
    <source>
    </source>
</evidence>
<evidence type="ECO:0000269" key="8">
    <source>
    </source>
</evidence>
<evidence type="ECO:0000269" key="9">
    <source>
    </source>
</evidence>
<evidence type="ECO:0000305" key="10"/>
<evidence type="ECO:0007829" key="11">
    <source>
        <dbReference type="PDB" id="7R9G"/>
    </source>
</evidence>
<sequence>MSEENLRPAYDDQVNEDVYKRGAQSKLTKARKADFDDEKDKKKDNDKHIDKRPKSGPRLDENGNPLPKEPRLPKRKVAVMVGYCGTGYHGMQYNPPNPTIESALFKAFVEAGAISKDNSNDLKKNGFMRAARTDKGVHAGGNLISLKMIIEDPDIKQKINEKLPEGIRVWDIERVNKAFDCRKMCSSRWYEYLLPTYSLIGPKPGSILYRDIEESKTELPGVLDEDLESKEFWEEFKKDANEKFSTEEIEAILAYVPPARDEFDINEELYQKVKKYKQLENAHRRRYRISAAKLAKFRASTSQYLGAHNFHNFTLGKDFKEPSAIRFMKDIKVSDPFVIGDAQTEWISIKIHGQSFMLHQIRKMVSMATLITRCGCPVERISQAYGQQKINIPKAPALGLLLEAPVFEGYNKRLEQFGYKAIDFSKYQDEVDKFKMKHIYDKIYKEEVDENVFNAFFSYIDSFNKVTGAQGEETADKSGPAVQKSIFEFLTAKGIPGLTDAPESNKKIKQRKRMEEEEAASKKAEISSTTQSNEPEVQPEAAAN</sequence>
<gene>
    <name type="primary">PUS1</name>
    <name type="ordered locus">YPL212C</name>
</gene>